<protein>
    <recommendedName>
        <fullName evidence="1">Tyrosine--tRNA ligase</fullName>
        <ecNumber evidence="1">6.1.1.1</ecNumber>
    </recommendedName>
    <alternativeName>
        <fullName evidence="1">Tyrosyl-tRNA synthetase</fullName>
        <shortName evidence="1">TyrRS</shortName>
    </alternativeName>
</protein>
<comment type="function">
    <text evidence="1">Catalyzes the attachment of tyrosine to tRNA(Tyr) in a two-step reaction: tyrosine is first activated by ATP to form Tyr-AMP and then transferred to the acceptor end of tRNA(Tyr).</text>
</comment>
<comment type="catalytic activity">
    <reaction evidence="1">
        <text>tRNA(Tyr) + L-tyrosine + ATP = L-tyrosyl-tRNA(Tyr) + AMP + diphosphate + H(+)</text>
        <dbReference type="Rhea" id="RHEA:10220"/>
        <dbReference type="Rhea" id="RHEA-COMP:9706"/>
        <dbReference type="Rhea" id="RHEA-COMP:9707"/>
        <dbReference type="ChEBI" id="CHEBI:15378"/>
        <dbReference type="ChEBI" id="CHEBI:30616"/>
        <dbReference type="ChEBI" id="CHEBI:33019"/>
        <dbReference type="ChEBI" id="CHEBI:58315"/>
        <dbReference type="ChEBI" id="CHEBI:78442"/>
        <dbReference type="ChEBI" id="CHEBI:78536"/>
        <dbReference type="ChEBI" id="CHEBI:456215"/>
        <dbReference type="EC" id="6.1.1.1"/>
    </reaction>
</comment>
<comment type="subunit">
    <text evidence="1">Homodimer.</text>
</comment>
<comment type="subcellular location">
    <subcellularLocation>
        <location evidence="1">Cytoplasm</location>
    </subcellularLocation>
</comment>
<comment type="similarity">
    <text evidence="1">Belongs to the class-I aminoacyl-tRNA synthetase family. TyrS type 1 subfamily.</text>
</comment>
<name>SYY_PORG3</name>
<proteinExistence type="inferred from homology"/>
<reference key="1">
    <citation type="journal article" date="2008" name="DNA Res.">
        <title>Determination of the genome sequence of Porphyromonas gingivalis strain ATCC 33277 and genomic comparison with strain W83 revealed extensive genome rearrangements in P. gingivalis.</title>
        <authorList>
            <person name="Naito M."/>
            <person name="Hirakawa H."/>
            <person name="Yamashita A."/>
            <person name="Ohara N."/>
            <person name="Shoji M."/>
            <person name="Yukitake H."/>
            <person name="Nakayama K."/>
            <person name="Toh H."/>
            <person name="Yoshimura F."/>
            <person name="Kuhara S."/>
            <person name="Hattori M."/>
            <person name="Hayashi T."/>
            <person name="Nakayama K."/>
        </authorList>
    </citation>
    <scope>NUCLEOTIDE SEQUENCE [LARGE SCALE GENOMIC DNA]</scope>
    <source>
        <strain>ATCC 33277 / DSM 20709 / CIP 103683 / JCM 12257 / NCTC 11834 / 2561</strain>
    </source>
</reference>
<evidence type="ECO:0000255" key="1">
    <source>
        <dbReference type="HAMAP-Rule" id="MF_02006"/>
    </source>
</evidence>
<accession>B2RHN4</accession>
<organism>
    <name type="scientific">Porphyromonas gingivalis (strain ATCC 33277 / DSM 20709 / CIP 103683 / JCM 12257 / NCTC 11834 / 2561)</name>
    <dbReference type="NCBI Taxonomy" id="431947"/>
    <lineage>
        <taxon>Bacteria</taxon>
        <taxon>Pseudomonadati</taxon>
        <taxon>Bacteroidota</taxon>
        <taxon>Bacteroidia</taxon>
        <taxon>Bacteroidales</taxon>
        <taxon>Porphyromonadaceae</taxon>
        <taxon>Porphyromonas</taxon>
    </lineage>
</organism>
<keyword id="KW-0030">Aminoacyl-tRNA synthetase</keyword>
<keyword id="KW-0067">ATP-binding</keyword>
<keyword id="KW-0963">Cytoplasm</keyword>
<keyword id="KW-0436">Ligase</keyword>
<keyword id="KW-0547">Nucleotide-binding</keyword>
<keyword id="KW-0648">Protein biosynthesis</keyword>
<keyword id="KW-0694">RNA-binding</keyword>
<feature type="chain" id="PRO_1000189318" description="Tyrosine--tRNA ligase">
    <location>
        <begin position="1"/>
        <end position="430"/>
    </location>
</feature>
<feature type="domain" description="S4 RNA-binding" evidence="1">
    <location>
        <begin position="362"/>
        <end position="430"/>
    </location>
</feature>
<feature type="short sequence motif" description="'HIGH' region">
    <location>
        <begin position="37"/>
        <end position="46"/>
    </location>
</feature>
<feature type="short sequence motif" description="'KMSKS' region">
    <location>
        <begin position="232"/>
        <end position="236"/>
    </location>
</feature>
<feature type="binding site" evidence="1">
    <location>
        <position position="32"/>
    </location>
    <ligand>
        <name>L-tyrosine</name>
        <dbReference type="ChEBI" id="CHEBI:58315"/>
    </ligand>
</feature>
<feature type="binding site" evidence="1">
    <location>
        <position position="172"/>
    </location>
    <ligand>
        <name>L-tyrosine</name>
        <dbReference type="ChEBI" id="CHEBI:58315"/>
    </ligand>
</feature>
<feature type="binding site" evidence="1">
    <location>
        <position position="176"/>
    </location>
    <ligand>
        <name>L-tyrosine</name>
        <dbReference type="ChEBI" id="CHEBI:58315"/>
    </ligand>
</feature>
<feature type="binding site" evidence="1">
    <location>
        <position position="235"/>
    </location>
    <ligand>
        <name>ATP</name>
        <dbReference type="ChEBI" id="CHEBI:30616"/>
    </ligand>
</feature>
<dbReference type="EC" id="6.1.1.1" evidence="1"/>
<dbReference type="EMBL" id="AP009380">
    <property type="protein sequence ID" value="BAG32879.1"/>
    <property type="molecule type" value="Genomic_DNA"/>
</dbReference>
<dbReference type="RefSeq" id="WP_012457449.1">
    <property type="nucleotide sequence ID" value="NC_010729.1"/>
</dbReference>
<dbReference type="SMR" id="B2RHN4"/>
<dbReference type="GeneID" id="29255602"/>
<dbReference type="KEGG" id="pgn:PGN_0360"/>
<dbReference type="eggNOG" id="COG0162">
    <property type="taxonomic scope" value="Bacteria"/>
</dbReference>
<dbReference type="HOGENOM" id="CLU_024003_0_3_10"/>
<dbReference type="OrthoDB" id="9804243at2"/>
<dbReference type="BioCyc" id="PGIN431947:G1G2V-397-MONOMER"/>
<dbReference type="Proteomes" id="UP000008842">
    <property type="component" value="Chromosome"/>
</dbReference>
<dbReference type="GO" id="GO:0005829">
    <property type="term" value="C:cytosol"/>
    <property type="evidence" value="ECO:0007669"/>
    <property type="project" value="TreeGrafter"/>
</dbReference>
<dbReference type="GO" id="GO:0005524">
    <property type="term" value="F:ATP binding"/>
    <property type="evidence" value="ECO:0007669"/>
    <property type="project" value="UniProtKB-UniRule"/>
</dbReference>
<dbReference type="GO" id="GO:0003723">
    <property type="term" value="F:RNA binding"/>
    <property type="evidence" value="ECO:0007669"/>
    <property type="project" value="UniProtKB-KW"/>
</dbReference>
<dbReference type="GO" id="GO:0004831">
    <property type="term" value="F:tyrosine-tRNA ligase activity"/>
    <property type="evidence" value="ECO:0007669"/>
    <property type="project" value="UniProtKB-UniRule"/>
</dbReference>
<dbReference type="GO" id="GO:0006437">
    <property type="term" value="P:tyrosyl-tRNA aminoacylation"/>
    <property type="evidence" value="ECO:0007669"/>
    <property type="project" value="UniProtKB-UniRule"/>
</dbReference>
<dbReference type="CDD" id="cd00805">
    <property type="entry name" value="TyrRS_core"/>
    <property type="match status" value="1"/>
</dbReference>
<dbReference type="FunFam" id="1.10.240.10:FF:000001">
    <property type="entry name" value="Tyrosine--tRNA ligase"/>
    <property type="match status" value="1"/>
</dbReference>
<dbReference type="FunFam" id="3.10.290.10:FF:000014">
    <property type="entry name" value="Tyrosine--tRNA ligase"/>
    <property type="match status" value="1"/>
</dbReference>
<dbReference type="FunFam" id="3.40.50.620:FF:000008">
    <property type="entry name" value="Tyrosine--tRNA ligase"/>
    <property type="match status" value="1"/>
</dbReference>
<dbReference type="Gene3D" id="3.40.50.620">
    <property type="entry name" value="HUPs"/>
    <property type="match status" value="1"/>
</dbReference>
<dbReference type="Gene3D" id="3.10.290.10">
    <property type="entry name" value="RNA-binding S4 domain"/>
    <property type="match status" value="1"/>
</dbReference>
<dbReference type="Gene3D" id="1.10.240.10">
    <property type="entry name" value="Tyrosyl-Transfer RNA Synthetase"/>
    <property type="match status" value="1"/>
</dbReference>
<dbReference type="HAMAP" id="MF_02006">
    <property type="entry name" value="Tyr_tRNA_synth_type1"/>
    <property type="match status" value="1"/>
</dbReference>
<dbReference type="InterPro" id="IPR001412">
    <property type="entry name" value="aa-tRNA-synth_I_CS"/>
</dbReference>
<dbReference type="InterPro" id="IPR002305">
    <property type="entry name" value="aa-tRNA-synth_Ic"/>
</dbReference>
<dbReference type="InterPro" id="IPR014729">
    <property type="entry name" value="Rossmann-like_a/b/a_fold"/>
</dbReference>
<dbReference type="InterPro" id="IPR036986">
    <property type="entry name" value="S4_RNA-bd_sf"/>
</dbReference>
<dbReference type="InterPro" id="IPR054608">
    <property type="entry name" value="SYY-like_C"/>
</dbReference>
<dbReference type="InterPro" id="IPR002307">
    <property type="entry name" value="Tyr-tRNA-ligase"/>
</dbReference>
<dbReference type="InterPro" id="IPR024088">
    <property type="entry name" value="Tyr-tRNA-ligase_bac-type"/>
</dbReference>
<dbReference type="InterPro" id="IPR024107">
    <property type="entry name" value="Tyr-tRNA-ligase_bac_1"/>
</dbReference>
<dbReference type="NCBIfam" id="TIGR00234">
    <property type="entry name" value="tyrS"/>
    <property type="match status" value="1"/>
</dbReference>
<dbReference type="PANTHER" id="PTHR11766:SF0">
    <property type="entry name" value="TYROSINE--TRNA LIGASE, MITOCHONDRIAL"/>
    <property type="match status" value="1"/>
</dbReference>
<dbReference type="PANTHER" id="PTHR11766">
    <property type="entry name" value="TYROSYL-TRNA SYNTHETASE"/>
    <property type="match status" value="1"/>
</dbReference>
<dbReference type="Pfam" id="PF22421">
    <property type="entry name" value="SYY_C-terminal"/>
    <property type="match status" value="1"/>
</dbReference>
<dbReference type="Pfam" id="PF00579">
    <property type="entry name" value="tRNA-synt_1b"/>
    <property type="match status" value="1"/>
</dbReference>
<dbReference type="PRINTS" id="PR01040">
    <property type="entry name" value="TRNASYNTHTYR"/>
</dbReference>
<dbReference type="SUPFAM" id="SSF55174">
    <property type="entry name" value="Alpha-L RNA-binding motif"/>
    <property type="match status" value="1"/>
</dbReference>
<dbReference type="SUPFAM" id="SSF52374">
    <property type="entry name" value="Nucleotidylyl transferase"/>
    <property type="match status" value="1"/>
</dbReference>
<dbReference type="PROSITE" id="PS00178">
    <property type="entry name" value="AA_TRNA_LIGASE_I"/>
    <property type="match status" value="1"/>
</dbReference>
<dbReference type="PROSITE" id="PS50889">
    <property type="entry name" value="S4"/>
    <property type="match status" value="1"/>
</dbReference>
<sequence length="430" mass="48071">MNFVEELRWRGMIHDIMPGTEEHLNKGMTSAYVGIDPTADSLHIGHLVGVMMLRHFQRAGHRPIALIGGATGMIGDPSMKSAERVLLDEATLRHNQDCIKQQLAKFLDFDSDAPNAAKLVNNYDWMKDYSFLGFIRDIGKHITVNYMMAKDSVKKRLSAESSTGLSFTEFSYQLLQGYDYLYLYRNEGCRLQMGGSDQWGNITTGTELIRRKDGGEAFALTCPLITKADGGKFGKTESGNIWLDPARTSPYAFYQFWLNVSDADAEKYIKIFTGLNQDEIAELATRQAEAPHLRPLQKRLAEEITVMVHSREAYDAAVEASEILFGKSTTEQLRKLDEATLLDVFAGVPQYHVERSRIATGISLVDLLADATDIFPSKGELRKTVKAGGVSLNKEKVADAEQTVGEDDLLSDRYLLAQKGKKSYYLIIVE</sequence>
<gene>
    <name evidence="1" type="primary">tyrS</name>
    <name type="ordered locus">PGN_0360</name>
</gene>